<reference key="1">
    <citation type="journal article" date="2002" name="Proc. Natl. Acad. Sci. U.S.A.">
        <title>Extensive mosaic structure revealed by the complete genome sequence of uropathogenic Escherichia coli.</title>
        <authorList>
            <person name="Welch R.A."/>
            <person name="Burland V."/>
            <person name="Plunkett G. III"/>
            <person name="Redford P."/>
            <person name="Roesch P."/>
            <person name="Rasko D."/>
            <person name="Buckles E.L."/>
            <person name="Liou S.-R."/>
            <person name="Boutin A."/>
            <person name="Hackett J."/>
            <person name="Stroud D."/>
            <person name="Mayhew G.F."/>
            <person name="Rose D.J."/>
            <person name="Zhou S."/>
            <person name="Schwartz D.C."/>
            <person name="Perna N.T."/>
            <person name="Mobley H.L.T."/>
            <person name="Donnenberg M.S."/>
            <person name="Blattner F.R."/>
        </authorList>
    </citation>
    <scope>NUCLEOTIDE SEQUENCE [LARGE SCALE GENOMIC DNA]</scope>
    <source>
        <strain>CFT073 / ATCC 700928 / UPEC</strain>
    </source>
</reference>
<name>PSPC_ECOL6</name>
<proteinExistence type="inferred from homology"/>
<gene>
    <name type="primary">pspC</name>
    <name type="ordered locus">c1777</name>
</gene>
<organism>
    <name type="scientific">Escherichia coli O6:H1 (strain CFT073 / ATCC 700928 / UPEC)</name>
    <dbReference type="NCBI Taxonomy" id="199310"/>
    <lineage>
        <taxon>Bacteria</taxon>
        <taxon>Pseudomonadati</taxon>
        <taxon>Pseudomonadota</taxon>
        <taxon>Gammaproteobacteria</taxon>
        <taxon>Enterobacterales</taxon>
        <taxon>Enterobacteriaceae</taxon>
        <taxon>Escherichia</taxon>
    </lineage>
</organism>
<sequence length="119" mass="13517">MAGINLNKKLWRIPQQGMVRGVCAGIANYFDVPVKLVRILVVLSIFFGLALFTLVAYIILSFALDPMPDNMAFGEQLPSSSELLDEVDRELAASETRLREMERYVTSDTFTLRSRFRQL</sequence>
<protein>
    <recommendedName>
        <fullName>Phage shock protein C</fullName>
    </recommendedName>
</protein>
<comment type="function">
    <text evidence="1">The phage shock protein (psp) operon (pspABCDE) may play a significant role in the competition for survival under nutrient- or energy-limited conditions. PspC is involved in transcription regulation (By similarity).</text>
</comment>
<comment type="subcellular location">
    <subcellularLocation>
        <location evidence="3">Cell inner membrane</location>
        <topology evidence="3">Single-pass membrane protein</topology>
    </subcellularLocation>
</comment>
<comment type="similarity">
    <text evidence="3">Belongs to the phageshock PspC family.</text>
</comment>
<evidence type="ECO:0000250" key="1"/>
<evidence type="ECO:0000255" key="2"/>
<evidence type="ECO:0000305" key="3"/>
<keyword id="KW-0010">Activator</keyword>
<keyword id="KW-0997">Cell inner membrane</keyword>
<keyword id="KW-1003">Cell membrane</keyword>
<keyword id="KW-0472">Membrane</keyword>
<keyword id="KW-1185">Reference proteome</keyword>
<keyword id="KW-0804">Transcription</keyword>
<keyword id="KW-0805">Transcription regulation</keyword>
<keyword id="KW-0812">Transmembrane</keyword>
<keyword id="KW-1133">Transmembrane helix</keyword>
<dbReference type="EMBL" id="AE014075">
    <property type="protein sequence ID" value="AAN80243.1"/>
    <property type="molecule type" value="Genomic_DNA"/>
</dbReference>
<dbReference type="RefSeq" id="WP_000907387.1">
    <property type="nucleotide sequence ID" value="NZ_CP051263.1"/>
</dbReference>
<dbReference type="SMR" id="P0AFN3"/>
<dbReference type="STRING" id="199310.c1777"/>
<dbReference type="GeneID" id="93775432"/>
<dbReference type="KEGG" id="ecc:c1777"/>
<dbReference type="eggNOG" id="COG1983">
    <property type="taxonomic scope" value="Bacteria"/>
</dbReference>
<dbReference type="HOGENOM" id="CLU_137949_2_0_6"/>
<dbReference type="BioCyc" id="ECOL199310:C1777-MONOMER"/>
<dbReference type="Proteomes" id="UP000001410">
    <property type="component" value="Chromosome"/>
</dbReference>
<dbReference type="GO" id="GO:0005886">
    <property type="term" value="C:plasma membrane"/>
    <property type="evidence" value="ECO:0007669"/>
    <property type="project" value="UniProtKB-SubCell"/>
</dbReference>
<dbReference type="InterPro" id="IPR014320">
    <property type="entry name" value="Phageshock_PspC"/>
</dbReference>
<dbReference type="InterPro" id="IPR007168">
    <property type="entry name" value="Phageshock_PspC_N"/>
</dbReference>
<dbReference type="InterPro" id="IPR052027">
    <property type="entry name" value="PspC"/>
</dbReference>
<dbReference type="NCBIfam" id="TIGR02978">
    <property type="entry name" value="phageshock_pspC"/>
    <property type="match status" value="1"/>
</dbReference>
<dbReference type="NCBIfam" id="NF007973">
    <property type="entry name" value="PRK10697.1"/>
    <property type="match status" value="1"/>
</dbReference>
<dbReference type="PANTHER" id="PTHR33885">
    <property type="entry name" value="PHAGE SHOCK PROTEIN C"/>
    <property type="match status" value="1"/>
</dbReference>
<dbReference type="PANTHER" id="PTHR33885:SF3">
    <property type="entry name" value="PHAGE SHOCK PROTEIN C"/>
    <property type="match status" value="1"/>
</dbReference>
<dbReference type="Pfam" id="PF04024">
    <property type="entry name" value="PspC"/>
    <property type="match status" value="1"/>
</dbReference>
<feature type="chain" id="PRO_0000097075" description="Phage shock protein C">
    <location>
        <begin position="1"/>
        <end position="119"/>
    </location>
</feature>
<feature type="transmembrane region" description="Helical" evidence="2">
    <location>
        <begin position="39"/>
        <end position="59"/>
    </location>
</feature>
<accession>P0AFN3</accession>
<accession>P23855</accession>